<name>PSBF_PHATC</name>
<comment type="function">
    <text evidence="1">This b-type cytochrome is tightly associated with the reaction center of photosystem II (PSII). PSII is a light-driven water:plastoquinone oxidoreductase that uses light energy to abstract electrons from H(2)O, generating O(2) and a proton gradient subsequently used for ATP formation. It consists of a core antenna complex that captures photons, and an electron transfer chain that converts photonic excitation into a charge separation.</text>
</comment>
<comment type="cofactor">
    <cofactor evidence="1">
        <name>heme b</name>
        <dbReference type="ChEBI" id="CHEBI:60344"/>
    </cofactor>
    <text evidence="1">With its partner (PsbE) binds heme. PSII binds additional chlorophylls, carotenoids and specific lipids.</text>
</comment>
<comment type="subunit">
    <text evidence="1">Heterodimer of an alpha subunit and a beta subunit. PSII is composed of 1 copy each of membrane proteins PsbA, PsbB, PsbC, PsbD, PsbE, PsbF, PsbH, PsbI, PsbJ, PsbK, PsbL, PsbM, PsbT, PsbX, PsbY, PsbZ, Psb30/Ycf12, at least 3 peripheral proteins of the oxygen-evolving complex and a large number of cofactors. It forms dimeric complexes.</text>
</comment>
<comment type="subcellular location">
    <subcellularLocation>
        <location evidence="1">Plastid</location>
        <location evidence="1">Chloroplast thylakoid membrane</location>
        <topology evidence="1">Single-pass membrane protein</topology>
    </subcellularLocation>
</comment>
<comment type="similarity">
    <text evidence="1">Belongs to the PsbE/PsbF family.</text>
</comment>
<dbReference type="EMBL" id="EF067920">
    <property type="protein sequence ID" value="ABK20593.1"/>
    <property type="molecule type" value="Genomic_DNA"/>
</dbReference>
<dbReference type="RefSeq" id="YP_874370.1">
    <property type="nucleotide sequence ID" value="NC_008588.1"/>
</dbReference>
<dbReference type="SMR" id="A0T0A4"/>
<dbReference type="STRING" id="556484.A0T0A4"/>
<dbReference type="GeneID" id="4524573"/>
<dbReference type="InParanoid" id="A0T0A4"/>
<dbReference type="Proteomes" id="UP000000759">
    <property type="component" value="Chloroplast"/>
</dbReference>
<dbReference type="GO" id="GO:0009535">
    <property type="term" value="C:chloroplast thylakoid membrane"/>
    <property type="evidence" value="ECO:0007669"/>
    <property type="project" value="UniProtKB-SubCell"/>
</dbReference>
<dbReference type="GO" id="GO:0009539">
    <property type="term" value="C:photosystem II reaction center"/>
    <property type="evidence" value="ECO:0007669"/>
    <property type="project" value="InterPro"/>
</dbReference>
<dbReference type="GO" id="GO:0009055">
    <property type="term" value="F:electron transfer activity"/>
    <property type="evidence" value="ECO:0007669"/>
    <property type="project" value="UniProtKB-UniRule"/>
</dbReference>
<dbReference type="GO" id="GO:0020037">
    <property type="term" value="F:heme binding"/>
    <property type="evidence" value="ECO:0007669"/>
    <property type="project" value="InterPro"/>
</dbReference>
<dbReference type="GO" id="GO:0005506">
    <property type="term" value="F:iron ion binding"/>
    <property type="evidence" value="ECO:0007669"/>
    <property type="project" value="UniProtKB-UniRule"/>
</dbReference>
<dbReference type="GO" id="GO:0009767">
    <property type="term" value="P:photosynthetic electron transport chain"/>
    <property type="evidence" value="ECO:0007669"/>
    <property type="project" value="InterPro"/>
</dbReference>
<dbReference type="HAMAP" id="MF_00643">
    <property type="entry name" value="PSII_PsbF"/>
    <property type="match status" value="1"/>
</dbReference>
<dbReference type="InterPro" id="IPR006241">
    <property type="entry name" value="PSII_cyt_b559_bsu"/>
</dbReference>
<dbReference type="InterPro" id="IPR006216">
    <property type="entry name" value="PSII_cyt_b559_CS"/>
</dbReference>
<dbReference type="InterPro" id="IPR013081">
    <property type="entry name" value="PSII_cyt_b559_N"/>
</dbReference>
<dbReference type="NCBIfam" id="TIGR01333">
    <property type="entry name" value="cyt_b559_beta"/>
    <property type="match status" value="1"/>
</dbReference>
<dbReference type="Pfam" id="PF00283">
    <property type="entry name" value="Cytochrom_B559"/>
    <property type="match status" value="1"/>
</dbReference>
<dbReference type="PIRSF" id="PIRSF000037">
    <property type="entry name" value="PsbF"/>
    <property type="match status" value="1"/>
</dbReference>
<dbReference type="SUPFAM" id="SSF161045">
    <property type="entry name" value="Cytochrome b559 subunits"/>
    <property type="match status" value="1"/>
</dbReference>
<dbReference type="PROSITE" id="PS00537">
    <property type="entry name" value="CYTOCHROME_B559"/>
    <property type="match status" value="1"/>
</dbReference>
<gene>
    <name evidence="1" type="primary">psbF</name>
</gene>
<keyword id="KW-0150">Chloroplast</keyword>
<keyword id="KW-0249">Electron transport</keyword>
<keyword id="KW-0349">Heme</keyword>
<keyword id="KW-0408">Iron</keyword>
<keyword id="KW-0472">Membrane</keyword>
<keyword id="KW-0479">Metal-binding</keyword>
<keyword id="KW-0602">Photosynthesis</keyword>
<keyword id="KW-0604">Photosystem II</keyword>
<keyword id="KW-0934">Plastid</keyword>
<keyword id="KW-1185">Reference proteome</keyword>
<keyword id="KW-0793">Thylakoid</keyword>
<keyword id="KW-0812">Transmembrane</keyword>
<keyword id="KW-1133">Transmembrane helix</keyword>
<keyword id="KW-0813">Transport</keyword>
<feature type="chain" id="PRO_0000275744" description="Cytochrome b559 subunit beta">
    <location>
        <begin position="1"/>
        <end position="43"/>
    </location>
</feature>
<feature type="transmembrane region" description="Helical" evidence="1">
    <location>
        <begin position="18"/>
        <end position="34"/>
    </location>
</feature>
<feature type="binding site" description="axial binding residue" evidence="1">
    <location>
        <position position="22"/>
    </location>
    <ligand>
        <name>heme</name>
        <dbReference type="ChEBI" id="CHEBI:30413"/>
        <note>ligand shared with alpha subunit</note>
    </ligand>
    <ligandPart>
        <name>Fe</name>
        <dbReference type="ChEBI" id="CHEBI:18248"/>
    </ligandPart>
</feature>
<proteinExistence type="inferred from homology"/>
<protein>
    <recommendedName>
        <fullName evidence="1">Cytochrome b559 subunit beta</fullName>
    </recommendedName>
    <alternativeName>
        <fullName evidence="1">PSII reaction center subunit VI</fullName>
    </alternativeName>
</protein>
<evidence type="ECO:0000255" key="1">
    <source>
        <dbReference type="HAMAP-Rule" id="MF_00643"/>
    </source>
</evidence>
<sequence length="43" mass="4894">MAKNINQPVAYPIFTFRWLAIHGLAIPTVFFLGGITAMQFIQR</sequence>
<reference key="1">
    <citation type="journal article" date="2007" name="Mol. Genet. Genomics">
        <title>Chloroplast genomes of the diatoms Phaeodactylum tricornutum and Thalassiosira pseudonana: comparison with other plastid genomes of the red lineage.</title>
        <authorList>
            <person name="Oudot-Le Secq M.-P."/>
            <person name="Grimwood J."/>
            <person name="Shapiro H."/>
            <person name="Armbrust E.V."/>
            <person name="Bowler C."/>
            <person name="Green B.R."/>
        </authorList>
    </citation>
    <scope>NUCLEOTIDE SEQUENCE [LARGE SCALE GENOMIC DNA]</scope>
    <source>
        <strain>CCAP 1055/1</strain>
    </source>
</reference>
<geneLocation type="chloroplast"/>
<accession>A0T0A4</accession>
<organism>
    <name type="scientific">Phaeodactylum tricornutum (strain CCAP 1055/1)</name>
    <dbReference type="NCBI Taxonomy" id="556484"/>
    <lineage>
        <taxon>Eukaryota</taxon>
        <taxon>Sar</taxon>
        <taxon>Stramenopiles</taxon>
        <taxon>Ochrophyta</taxon>
        <taxon>Bacillariophyta</taxon>
        <taxon>Bacillariophyceae</taxon>
        <taxon>Bacillariophycidae</taxon>
        <taxon>Naviculales</taxon>
        <taxon>Phaeodactylaceae</taxon>
        <taxon>Phaeodactylum</taxon>
    </lineage>
</organism>